<comment type="function">
    <text evidence="1">The PI(3,5)P2 regulatory complex regulates both the synthesis and turnover of phosphatidylinositol 3,5-bisphosphate (PtdIns(3,5)P2). Necessary for proper vacuole morphology. Plays an important role in osmotically-induced vacuole fragmentation. Required for cytoplasm to vacuole transport (Cvt) vesicle formation, pexophagy and starvation-induced autophagy. Involved in correct atg9 trafficking to the pre-autophagosomal structure. Might also be involved in premeiotic DNA replication (By similarity).</text>
</comment>
<comment type="subunit">
    <text evidence="1">Component of the PI(3,5)P2 regulatory complex.</text>
</comment>
<comment type="subcellular location">
    <subcellularLocation>
        <location evidence="1">Preautophagosomal structure membrane</location>
        <topology evidence="1">Peripheral membrane protein</topology>
    </subcellularLocation>
    <subcellularLocation>
        <location evidence="1">Vacuole membrane</location>
        <topology evidence="1">Peripheral membrane protein</topology>
    </subcellularLocation>
    <subcellularLocation>
        <location evidence="1">Endosome membrane</location>
        <topology evidence="1">Peripheral membrane protein</topology>
    </subcellularLocation>
</comment>
<comment type="domain">
    <text evidence="1">The N-terminus might form a beta-propeller domain involved in specific binding to phosphatidylinositol 3,5-bisphosphate (PIP2), leading to the association of the protein to the membrane.</text>
</comment>
<comment type="domain">
    <text evidence="2">The L/FRRG motif is essential for the cytoplasm to vacuole transport (Cvt) pathway, for the recruitment of atg8 and atg16 to the PAS in nutrient-rich medium, and for its recruitment to and dissociation from the PAS under starvation conditions.</text>
</comment>
<comment type="similarity">
    <text evidence="4">Belongs to the WD repeat PROPPIN family.</text>
</comment>
<accession>A7EW77</accession>
<protein>
    <recommendedName>
        <fullName>Autophagy-related protein 18</fullName>
    </recommendedName>
</protein>
<keyword id="KW-0072">Autophagy</keyword>
<keyword id="KW-0967">Endosome</keyword>
<keyword id="KW-0472">Membrane</keyword>
<keyword id="KW-0653">Protein transport</keyword>
<keyword id="KW-1185">Reference proteome</keyword>
<keyword id="KW-0677">Repeat</keyword>
<keyword id="KW-0813">Transport</keyword>
<keyword id="KW-0926">Vacuole</keyword>
<keyword id="KW-0853">WD repeat</keyword>
<reference key="1">
    <citation type="journal article" date="2011" name="PLoS Genet.">
        <title>Genomic analysis of the necrotrophic fungal pathogens Sclerotinia sclerotiorum and Botrytis cinerea.</title>
        <authorList>
            <person name="Amselem J."/>
            <person name="Cuomo C.A."/>
            <person name="van Kan J.A.L."/>
            <person name="Viaud M."/>
            <person name="Benito E.P."/>
            <person name="Couloux A."/>
            <person name="Coutinho P.M."/>
            <person name="de Vries R.P."/>
            <person name="Dyer P.S."/>
            <person name="Fillinger S."/>
            <person name="Fournier E."/>
            <person name="Gout L."/>
            <person name="Hahn M."/>
            <person name="Kohn L."/>
            <person name="Lapalu N."/>
            <person name="Plummer K.M."/>
            <person name="Pradier J.-M."/>
            <person name="Quevillon E."/>
            <person name="Sharon A."/>
            <person name="Simon A."/>
            <person name="ten Have A."/>
            <person name="Tudzynski B."/>
            <person name="Tudzynski P."/>
            <person name="Wincker P."/>
            <person name="Andrew M."/>
            <person name="Anthouard V."/>
            <person name="Beever R.E."/>
            <person name="Beffa R."/>
            <person name="Benoit I."/>
            <person name="Bouzid O."/>
            <person name="Brault B."/>
            <person name="Chen Z."/>
            <person name="Choquer M."/>
            <person name="Collemare J."/>
            <person name="Cotton P."/>
            <person name="Danchin E.G."/>
            <person name="Da Silva C."/>
            <person name="Gautier A."/>
            <person name="Giraud C."/>
            <person name="Giraud T."/>
            <person name="Gonzalez C."/>
            <person name="Grossetete S."/>
            <person name="Gueldener U."/>
            <person name="Henrissat B."/>
            <person name="Howlett B.J."/>
            <person name="Kodira C."/>
            <person name="Kretschmer M."/>
            <person name="Lappartient A."/>
            <person name="Leroch M."/>
            <person name="Levis C."/>
            <person name="Mauceli E."/>
            <person name="Neuveglise C."/>
            <person name="Oeser B."/>
            <person name="Pearson M."/>
            <person name="Poulain J."/>
            <person name="Poussereau N."/>
            <person name="Quesneville H."/>
            <person name="Rascle C."/>
            <person name="Schumacher J."/>
            <person name="Segurens B."/>
            <person name="Sexton A."/>
            <person name="Silva E."/>
            <person name="Sirven C."/>
            <person name="Soanes D.M."/>
            <person name="Talbot N.J."/>
            <person name="Templeton M."/>
            <person name="Yandava C."/>
            <person name="Yarden O."/>
            <person name="Zeng Q."/>
            <person name="Rollins J.A."/>
            <person name="Lebrun M.-H."/>
            <person name="Dickman M."/>
        </authorList>
    </citation>
    <scope>NUCLEOTIDE SEQUENCE [LARGE SCALE GENOMIC DNA]</scope>
    <source>
        <strain>ATCC 18683 / 1980 / Ss-1</strain>
    </source>
</reference>
<evidence type="ECO:0000250" key="1"/>
<evidence type="ECO:0000250" key="2">
    <source>
        <dbReference type="UniProtKB" id="P43601"/>
    </source>
</evidence>
<evidence type="ECO:0000256" key="3">
    <source>
        <dbReference type="SAM" id="MobiDB-lite"/>
    </source>
</evidence>
<evidence type="ECO:0000305" key="4"/>
<organism>
    <name type="scientific">Sclerotinia sclerotiorum (strain ATCC 18683 / 1980 / Ss-1)</name>
    <name type="common">White mold</name>
    <name type="synonym">Whetzelinia sclerotiorum</name>
    <dbReference type="NCBI Taxonomy" id="665079"/>
    <lineage>
        <taxon>Eukaryota</taxon>
        <taxon>Fungi</taxon>
        <taxon>Dikarya</taxon>
        <taxon>Ascomycota</taxon>
        <taxon>Pezizomycotina</taxon>
        <taxon>Leotiomycetes</taxon>
        <taxon>Helotiales</taxon>
        <taxon>Sclerotiniaceae</taxon>
        <taxon>Sclerotinia</taxon>
    </lineage>
</organism>
<sequence>MNYVTFNQDYTCLAVGTAKGFRIYHTDPFSKIFTGDNENVTIIEMLFSTSLVAIKQSPRHIVIQNTKRGTVICELTFPSAVLAVRLNRKRFAVLLEEEIYLYDIQNMGLLYTISTSANPNAICALSASSENCYLAYPLPKPREETGDKRPAHAPPLSPYVAPTSGEVLIFDAKSLKAVNVVEAHRAPLSCIALNNDGTLLATASETGTIIRVFSVPDGQKLYQFRRGTYPSTIFSLSFNMSSTLLCVSSNSDTIHIFRLGGPVTGMPESPRSPNGKDKWKRSRSFDSDNGSPPAGTSPGSEMADVPVEKSKSTGTFGSMIRRSSQMMGKSVAGVVGGYLPQAVTEMWEPARDFAFIKLPKGGMGATSRSGPLKSVVAISSSSPQVMVVTSDGGFYIYSIDMEAGGEGVLVKQYSGRRQSRAAS</sequence>
<feature type="chain" id="PRO_0000318008" description="Autophagy-related protein 18">
    <location>
        <begin position="1"/>
        <end position="423"/>
    </location>
</feature>
<feature type="repeat" description="WD 1">
    <location>
        <begin position="1"/>
        <end position="34"/>
    </location>
</feature>
<feature type="repeat" description="WD 2">
    <location>
        <begin position="183"/>
        <end position="223"/>
    </location>
</feature>
<feature type="repeat" description="WD 3">
    <location>
        <begin position="228"/>
        <end position="267"/>
    </location>
</feature>
<feature type="repeat" description="WD 4">
    <location>
        <begin position="367"/>
        <end position="407"/>
    </location>
</feature>
<feature type="region of interest" description="Disordered" evidence="3">
    <location>
        <begin position="260"/>
        <end position="320"/>
    </location>
</feature>
<feature type="short sequence motif" description="L/FRRG motif" evidence="2">
    <location>
        <begin position="224"/>
        <end position="228"/>
    </location>
</feature>
<name>ATG18_SCLS1</name>
<dbReference type="EMBL" id="CH476633">
    <property type="protein sequence ID" value="EDN93719.1"/>
    <property type="molecule type" value="Genomic_DNA"/>
</dbReference>
<dbReference type="RefSeq" id="XP_001589864.1">
    <property type="nucleotide sequence ID" value="XM_001589814.1"/>
</dbReference>
<dbReference type="SMR" id="A7EW77"/>
<dbReference type="FunCoup" id="A7EW77">
    <property type="interactions" value="529"/>
</dbReference>
<dbReference type="STRING" id="665079.A7EW77"/>
<dbReference type="EnsemblFungi" id="EDN93719">
    <property type="protein sequence ID" value="EDN93719"/>
    <property type="gene ID" value="SS1G_09586"/>
</dbReference>
<dbReference type="GeneID" id="5485667"/>
<dbReference type="KEGG" id="ssl:SS1G_09586"/>
<dbReference type="eggNOG" id="KOG2110">
    <property type="taxonomic scope" value="Eukaryota"/>
</dbReference>
<dbReference type="HOGENOM" id="CLU_025895_5_0_1"/>
<dbReference type="InParanoid" id="A7EW77"/>
<dbReference type="OMA" id="NIAILEM"/>
<dbReference type="Proteomes" id="UP000001312">
    <property type="component" value="Unassembled WGS sequence"/>
</dbReference>
<dbReference type="GO" id="GO:0005829">
    <property type="term" value="C:cytosol"/>
    <property type="evidence" value="ECO:0000318"/>
    <property type="project" value="GO_Central"/>
</dbReference>
<dbReference type="GO" id="GO:0010008">
    <property type="term" value="C:endosome membrane"/>
    <property type="evidence" value="ECO:0007669"/>
    <property type="project" value="UniProtKB-SubCell"/>
</dbReference>
<dbReference type="GO" id="GO:0000329">
    <property type="term" value="C:fungal-type vacuole membrane"/>
    <property type="evidence" value="ECO:0000318"/>
    <property type="project" value="GO_Central"/>
</dbReference>
<dbReference type="GO" id="GO:0034045">
    <property type="term" value="C:phagophore assembly site membrane"/>
    <property type="evidence" value="ECO:0000318"/>
    <property type="project" value="GO_Central"/>
</dbReference>
<dbReference type="GO" id="GO:0080025">
    <property type="term" value="F:phosphatidylinositol-3,5-bisphosphate binding"/>
    <property type="evidence" value="ECO:0000318"/>
    <property type="project" value="GO_Central"/>
</dbReference>
<dbReference type="GO" id="GO:0032266">
    <property type="term" value="F:phosphatidylinositol-3-phosphate binding"/>
    <property type="evidence" value="ECO:0000318"/>
    <property type="project" value="GO_Central"/>
</dbReference>
<dbReference type="GO" id="GO:0030674">
    <property type="term" value="F:protein-macromolecule adaptor activity"/>
    <property type="evidence" value="ECO:0000318"/>
    <property type="project" value="GO_Central"/>
</dbReference>
<dbReference type="GO" id="GO:0000422">
    <property type="term" value="P:autophagy of mitochondrion"/>
    <property type="evidence" value="ECO:0000318"/>
    <property type="project" value="GO_Central"/>
</dbReference>
<dbReference type="GO" id="GO:0061723">
    <property type="term" value="P:glycophagy"/>
    <property type="evidence" value="ECO:0000318"/>
    <property type="project" value="GO_Central"/>
</dbReference>
<dbReference type="GO" id="GO:0044804">
    <property type="term" value="P:nucleophagy"/>
    <property type="evidence" value="ECO:0000318"/>
    <property type="project" value="GO_Central"/>
</dbReference>
<dbReference type="GO" id="GO:0000425">
    <property type="term" value="P:pexophagy"/>
    <property type="evidence" value="ECO:0000318"/>
    <property type="project" value="GO_Central"/>
</dbReference>
<dbReference type="GO" id="GO:0034497">
    <property type="term" value="P:protein localization to phagophore assembly site"/>
    <property type="evidence" value="ECO:0000318"/>
    <property type="project" value="GO_Central"/>
</dbReference>
<dbReference type="GO" id="GO:0015031">
    <property type="term" value="P:protein transport"/>
    <property type="evidence" value="ECO:0007669"/>
    <property type="project" value="UniProtKB-KW"/>
</dbReference>
<dbReference type="FunFam" id="2.130.10.10:FF:001251">
    <property type="entry name" value="Autophagy-related protein 18"/>
    <property type="match status" value="1"/>
</dbReference>
<dbReference type="Gene3D" id="2.130.10.10">
    <property type="entry name" value="YVTN repeat-like/Quinoprotein amine dehydrogenase"/>
    <property type="match status" value="1"/>
</dbReference>
<dbReference type="InterPro" id="IPR048720">
    <property type="entry name" value="PROPPIN"/>
</dbReference>
<dbReference type="InterPro" id="IPR015943">
    <property type="entry name" value="WD40/YVTN_repeat-like_dom_sf"/>
</dbReference>
<dbReference type="InterPro" id="IPR036322">
    <property type="entry name" value="WD40_repeat_dom_sf"/>
</dbReference>
<dbReference type="InterPro" id="IPR001680">
    <property type="entry name" value="WD40_rpt"/>
</dbReference>
<dbReference type="PANTHER" id="PTHR11227">
    <property type="entry name" value="WD-REPEAT PROTEIN INTERACTING WITH PHOSPHOINOSIDES WIPI -RELATED"/>
    <property type="match status" value="1"/>
</dbReference>
<dbReference type="Pfam" id="PF21032">
    <property type="entry name" value="PROPPIN"/>
    <property type="match status" value="2"/>
</dbReference>
<dbReference type="SMART" id="SM00320">
    <property type="entry name" value="WD40"/>
    <property type="match status" value="2"/>
</dbReference>
<dbReference type="SUPFAM" id="SSF50978">
    <property type="entry name" value="WD40 repeat-like"/>
    <property type="match status" value="1"/>
</dbReference>
<proteinExistence type="inferred from homology"/>
<gene>
    <name type="primary">atg18</name>
    <name type="ORF">SS1G_09586</name>
</gene>